<gene>
    <name type="primary">Idgf1</name>
    <name type="ORF">CG4472</name>
</gene>
<comment type="function">
    <text evidence="5">Cooperates with insulin-like peptides to stimulate the proliferation, polarization and motility of imaginal disk cells. May act by stabilizing the binding of insulin-like peptides to its receptor through a simultaneous interaction with both molecules to form a multiprotein signaling complex.</text>
</comment>
<comment type="subcellular location">
    <subcellularLocation>
        <location evidence="5">Secreted</location>
    </subcellularLocation>
    <text>Secreted in hemolymph. It is probably transported to target tissues via hemolymph.</text>
</comment>
<comment type="tissue specificity">
    <text evidence="5">Primarily expressed in yolk cells and fat body. In larvae, it is expressed in large salivary gland cells and weakly expressed in imaginal disks. Less expressed than Idgf2 and Idgf4.</text>
</comment>
<comment type="developmental stage">
    <text evidence="5">Expressed both maternally and zygotically. Expressed throughout development, with a much stronger expression during larval stages.</text>
</comment>
<comment type="miscellaneous">
    <text>Lacks the typical Glu active site in position 150 that is replaced by a Gln residue, preventing the hydrolase activity. Its precise function remains unclear.</text>
</comment>
<comment type="similarity">
    <text evidence="6">Belongs to the glycosyl hydrolase 18 family. IDGF subfamily.</text>
</comment>
<name>IDGF1_DROME</name>
<proteinExistence type="evidence at protein level"/>
<dbReference type="EMBL" id="AF102236">
    <property type="protein sequence ID" value="AAC99417.1"/>
    <property type="molecule type" value="mRNA"/>
</dbReference>
<dbReference type="EMBL" id="AF394691">
    <property type="protein sequence ID" value="AAM69623.1"/>
    <property type="molecule type" value="Genomic_DNA"/>
</dbReference>
<dbReference type="EMBL" id="AF394692">
    <property type="protein sequence ID" value="AAM69624.1"/>
    <property type="molecule type" value="Genomic_DNA"/>
</dbReference>
<dbReference type="EMBL" id="AF394693">
    <property type="protein sequence ID" value="AAM69625.1"/>
    <property type="molecule type" value="Genomic_DNA"/>
</dbReference>
<dbReference type="EMBL" id="AF394694">
    <property type="protein sequence ID" value="AAM69626.1"/>
    <property type="molecule type" value="Genomic_DNA"/>
</dbReference>
<dbReference type="EMBL" id="AF394695">
    <property type="protein sequence ID" value="AAM69627.1"/>
    <property type="molecule type" value="Genomic_DNA"/>
</dbReference>
<dbReference type="EMBL" id="AF394696">
    <property type="protein sequence ID" value="AAM69628.1"/>
    <property type="molecule type" value="Genomic_DNA"/>
</dbReference>
<dbReference type="EMBL" id="AF394697">
    <property type="protein sequence ID" value="AAM69629.1"/>
    <property type="molecule type" value="Genomic_DNA"/>
</dbReference>
<dbReference type="EMBL" id="AF394698">
    <property type="protein sequence ID" value="AAM69630.1"/>
    <property type="molecule type" value="Genomic_DNA"/>
</dbReference>
<dbReference type="EMBL" id="AF394699">
    <property type="protein sequence ID" value="AAM69631.1"/>
    <property type="molecule type" value="Genomic_DNA"/>
</dbReference>
<dbReference type="EMBL" id="AF394700">
    <property type="protein sequence ID" value="AAM69632.1"/>
    <property type="molecule type" value="Genomic_DNA"/>
</dbReference>
<dbReference type="EMBL" id="AF394701">
    <property type="protein sequence ID" value="AAM69633.1"/>
    <property type="molecule type" value="Genomic_DNA"/>
</dbReference>
<dbReference type="EMBL" id="AF394702">
    <property type="protein sequence ID" value="AAM69634.1"/>
    <property type="molecule type" value="Genomic_DNA"/>
</dbReference>
<dbReference type="EMBL" id="AF394703">
    <property type="protein sequence ID" value="AAM69635.1"/>
    <property type="molecule type" value="Genomic_DNA"/>
</dbReference>
<dbReference type="EMBL" id="AF394704">
    <property type="protein sequence ID" value="AAM69636.1"/>
    <property type="molecule type" value="Genomic_DNA"/>
</dbReference>
<dbReference type="EMBL" id="AF394705">
    <property type="protein sequence ID" value="AAM69637.1"/>
    <property type="molecule type" value="Genomic_DNA"/>
</dbReference>
<dbReference type="EMBL" id="AF394706">
    <property type="protein sequence ID" value="AAM69638.1"/>
    <property type="molecule type" value="Genomic_DNA"/>
</dbReference>
<dbReference type="EMBL" id="AF394707">
    <property type="protein sequence ID" value="AAM69639.1"/>
    <property type="molecule type" value="Genomic_DNA"/>
</dbReference>
<dbReference type="EMBL" id="AF394708">
    <property type="protein sequence ID" value="AAM69640.1"/>
    <property type="molecule type" value="Genomic_DNA"/>
</dbReference>
<dbReference type="EMBL" id="AF394709">
    <property type="protein sequence ID" value="AAM69641.1"/>
    <property type="molecule type" value="Genomic_DNA"/>
</dbReference>
<dbReference type="EMBL" id="AF394710">
    <property type="protein sequence ID" value="AAM69642.1"/>
    <property type="molecule type" value="Genomic_DNA"/>
</dbReference>
<dbReference type="EMBL" id="AE014134">
    <property type="protein sequence ID" value="AAF53535.1"/>
    <property type="molecule type" value="Genomic_DNA"/>
</dbReference>
<dbReference type="EMBL" id="AY069157">
    <property type="protein sequence ID" value="AAL39302.1"/>
    <property type="molecule type" value="mRNA"/>
</dbReference>
<dbReference type="RefSeq" id="NP_477258.1">
    <property type="nucleotide sequence ID" value="NM_057910.5"/>
</dbReference>
<dbReference type="SMR" id="Q8MM24"/>
<dbReference type="FunCoup" id="Q8MM24">
    <property type="interactions" value="8"/>
</dbReference>
<dbReference type="STRING" id="7227.FBpp0080417"/>
<dbReference type="CAZy" id="GH18">
    <property type="family name" value="Glycoside Hydrolase Family 18"/>
</dbReference>
<dbReference type="GlyCosmos" id="Q8MM24">
    <property type="glycosylation" value="3 sites, No reported glycans"/>
</dbReference>
<dbReference type="GlyGen" id="Q8MM24">
    <property type="glycosylation" value="3 sites"/>
</dbReference>
<dbReference type="iPTMnet" id="Q8MM24"/>
<dbReference type="PaxDb" id="7227-FBpp0080417"/>
<dbReference type="DNASU" id="34978"/>
<dbReference type="EnsemblMetazoa" id="FBtr0080860">
    <property type="protein sequence ID" value="FBpp0080417"/>
    <property type="gene ID" value="FBgn0020416"/>
</dbReference>
<dbReference type="GeneID" id="34978"/>
<dbReference type="KEGG" id="dme:Dmel_CG4472"/>
<dbReference type="AGR" id="FB:FBgn0020416"/>
<dbReference type="CTD" id="34978"/>
<dbReference type="FlyBase" id="FBgn0020416">
    <property type="gene designation" value="Idgf1"/>
</dbReference>
<dbReference type="VEuPathDB" id="VectorBase:FBgn0020416"/>
<dbReference type="eggNOG" id="KOG2806">
    <property type="taxonomic scope" value="Eukaryota"/>
</dbReference>
<dbReference type="GeneTree" id="ENSGT00940000167840"/>
<dbReference type="HOGENOM" id="CLU_002833_3_2_1"/>
<dbReference type="InParanoid" id="Q8MM24"/>
<dbReference type="OMA" id="SIKYFMG"/>
<dbReference type="OrthoDB" id="76388at2759"/>
<dbReference type="PhylomeDB" id="Q8MM24"/>
<dbReference type="Reactome" id="R-DME-6798695">
    <property type="pathway name" value="Neutrophil degranulation"/>
</dbReference>
<dbReference type="BioGRID-ORCS" id="34978">
    <property type="hits" value="0 hits in 1 CRISPR screen"/>
</dbReference>
<dbReference type="GenomeRNAi" id="34978"/>
<dbReference type="PRO" id="PR:Q8MM24"/>
<dbReference type="Proteomes" id="UP000000803">
    <property type="component" value="Chromosome 2L"/>
</dbReference>
<dbReference type="Bgee" id="FBgn0020416">
    <property type="expression patterns" value="Expressed in spermathecum and 74 other cell types or tissues"/>
</dbReference>
<dbReference type="GO" id="GO:0005576">
    <property type="term" value="C:extracellular region"/>
    <property type="evidence" value="ECO:0000318"/>
    <property type="project" value="GO_Central"/>
</dbReference>
<dbReference type="GO" id="GO:0008061">
    <property type="term" value="F:chitin binding"/>
    <property type="evidence" value="ECO:0007669"/>
    <property type="project" value="InterPro"/>
</dbReference>
<dbReference type="GO" id="GO:0008084">
    <property type="term" value="F:imaginal disc growth factor receptor binding"/>
    <property type="evidence" value="ECO:0000314"/>
    <property type="project" value="UniProtKB"/>
</dbReference>
<dbReference type="GO" id="GO:0005975">
    <property type="term" value="P:carbohydrate metabolic process"/>
    <property type="evidence" value="ECO:0007669"/>
    <property type="project" value="InterPro"/>
</dbReference>
<dbReference type="GO" id="GO:0006032">
    <property type="term" value="P:chitin catabolic process"/>
    <property type="evidence" value="ECO:0000318"/>
    <property type="project" value="GO_Central"/>
</dbReference>
<dbReference type="GO" id="GO:0040003">
    <property type="term" value="P:chitin-based cuticle development"/>
    <property type="evidence" value="ECO:0000315"/>
    <property type="project" value="FlyBase"/>
</dbReference>
<dbReference type="GO" id="GO:0018990">
    <property type="term" value="P:ecdysis, chitin-based cuticle"/>
    <property type="evidence" value="ECO:0000315"/>
    <property type="project" value="FlyBase"/>
</dbReference>
<dbReference type="GO" id="GO:1990399">
    <property type="term" value="P:epithelium regeneration"/>
    <property type="evidence" value="ECO:0000315"/>
    <property type="project" value="FlyBase"/>
</dbReference>
<dbReference type="GO" id="GO:0007444">
    <property type="term" value="P:imaginal disc development"/>
    <property type="evidence" value="ECO:0000314"/>
    <property type="project" value="UniProtKB"/>
</dbReference>
<dbReference type="GO" id="GO:2000035">
    <property type="term" value="P:regulation of stem cell division"/>
    <property type="evidence" value="ECO:0000315"/>
    <property type="project" value="FlyBase"/>
</dbReference>
<dbReference type="GO" id="GO:0042060">
    <property type="term" value="P:wound healing"/>
    <property type="evidence" value="ECO:0000315"/>
    <property type="project" value="FlyBase"/>
</dbReference>
<dbReference type="CDD" id="cd02873">
    <property type="entry name" value="GH18_IDGF"/>
    <property type="match status" value="1"/>
</dbReference>
<dbReference type="FunFam" id="3.10.50.10:FF:000007">
    <property type="entry name" value="chitinase-like protein Idgf4"/>
    <property type="match status" value="1"/>
</dbReference>
<dbReference type="FunFam" id="3.20.20.80:FF:000071">
    <property type="entry name" value="Imaginal disc growth factor"/>
    <property type="match status" value="1"/>
</dbReference>
<dbReference type="Gene3D" id="3.10.50.10">
    <property type="match status" value="1"/>
</dbReference>
<dbReference type="Gene3D" id="3.20.20.80">
    <property type="entry name" value="Glycosidases"/>
    <property type="match status" value="1"/>
</dbReference>
<dbReference type="InterPro" id="IPR011583">
    <property type="entry name" value="Chitinase_II/V-like_cat"/>
</dbReference>
<dbReference type="InterPro" id="IPR029070">
    <property type="entry name" value="Chitinase_insertion_sf"/>
</dbReference>
<dbReference type="InterPro" id="IPR001223">
    <property type="entry name" value="Glyco_hydro18_cat"/>
</dbReference>
<dbReference type="InterPro" id="IPR017853">
    <property type="entry name" value="Glycoside_hydrolase_SF"/>
</dbReference>
<dbReference type="InterPro" id="IPR050314">
    <property type="entry name" value="Glycosyl_Hydrlase_18"/>
</dbReference>
<dbReference type="InterPro" id="IPR015520">
    <property type="entry name" value="IDGF"/>
</dbReference>
<dbReference type="PANTHER" id="PTHR11177">
    <property type="entry name" value="CHITINASE"/>
    <property type="match status" value="1"/>
</dbReference>
<dbReference type="PANTHER" id="PTHR11177:SF235">
    <property type="entry name" value="CHITINASE-LIKE PROTEIN IDGF1-RELATED"/>
    <property type="match status" value="1"/>
</dbReference>
<dbReference type="Pfam" id="PF00704">
    <property type="entry name" value="Glyco_hydro_18"/>
    <property type="match status" value="1"/>
</dbReference>
<dbReference type="SMART" id="SM00636">
    <property type="entry name" value="Glyco_18"/>
    <property type="match status" value="1"/>
</dbReference>
<dbReference type="SUPFAM" id="SSF51445">
    <property type="entry name" value="(Trans)glycosidases"/>
    <property type="match status" value="1"/>
</dbReference>
<dbReference type="SUPFAM" id="SSF54556">
    <property type="entry name" value="Chitinase insertion domain"/>
    <property type="match status" value="1"/>
</dbReference>
<dbReference type="PROSITE" id="PS51910">
    <property type="entry name" value="GH18_2"/>
    <property type="match status" value="1"/>
</dbReference>
<feature type="signal peptide" evidence="5">
    <location>
        <begin position="1"/>
        <end position="20"/>
    </location>
</feature>
<feature type="chain" id="PRO_0000011980" description="Chitinase-like protein Idgf1">
    <location>
        <begin position="21"/>
        <end position="439"/>
    </location>
</feature>
<feature type="domain" description="GH18" evidence="3">
    <location>
        <begin position="22"/>
        <end position="439"/>
    </location>
</feature>
<feature type="glycosylation site" description="N-linked (GlcNAc...) asparagine" evidence="2">
    <location>
        <position position="122"/>
    </location>
</feature>
<feature type="glycosylation site" description="N-linked (GlcNAc...) asparagine" evidence="1">
    <location>
        <position position="218"/>
    </location>
</feature>
<feature type="glycosylation site" description="N-linked (GlcNAc...) asparagine" evidence="4">
    <location>
        <position position="346"/>
    </location>
</feature>
<feature type="disulfide bond" evidence="3">
    <location>
        <begin position="26"/>
        <end position="53"/>
    </location>
</feature>
<feature type="disulfide bond" evidence="1">
    <location>
        <begin position="340"/>
        <end position="423"/>
    </location>
</feature>
<feature type="sequence variant" description="In strain: MB15b and MB25a.">
    <original>I</original>
    <variation>L</variation>
    <location>
        <position position="8"/>
    </location>
</feature>
<feature type="sequence variant" description="In strain: MB13a, MB15b, MB25a, MB34a, MB37a and MB63a.">
    <original>N</original>
    <variation>S</variation>
    <location>
        <position position="44"/>
    </location>
</feature>
<feature type="sequence variant" description="In strain: MB01a and MB33a.">
    <original>S</original>
    <variation>G</variation>
    <location>
        <position position="100"/>
    </location>
</feature>
<feature type="sequence variant" description="In strain: MB08b, MB29b, MB36a, MB40b, MB47a, MB48b, MB52b and MB58b.">
    <original>V</original>
    <variation>I</variation>
    <location>
        <position position="116"/>
    </location>
</feature>
<feature type="sequence variant" description="In strain: MB08b, MB29b, MB40b, MB45b, MB47a, MB48b, MB52b and MB80b.">
    <original>E</original>
    <variation>Q</variation>
    <location>
        <position position="186"/>
    </location>
</feature>
<feature type="sequence variant" description="In strain: MB01a, MB08b, MB29b, MB36a, MB45b, MB47a, MB48b and MB52b and MB80b.">
    <original>G</original>
    <variation>E</variation>
    <location>
        <position position="305"/>
    </location>
</feature>
<feature type="sequence variant" description="In strain: MB48b and MB52b.">
    <original>I</original>
    <variation>V</variation>
    <location>
        <position position="313"/>
    </location>
</feature>
<feature type="sequence variant" description="In strain: MB34a and MB39b.">
    <original>V</original>
    <variation>E</variation>
    <location>
        <position position="399"/>
    </location>
</feature>
<feature type="sequence variant" description="In strain: MB08b, MB15b, MB25a, MB29b, MB33a, MB34a, MB36a, MB39b, MB45b, MB46b, MB47a, MB48b, MB52b, MB58b, MB63a and MB80b.">
    <original>G</original>
    <variation>S</variation>
    <location>
        <position position="403"/>
    </location>
</feature>
<feature type="sequence conflict" description="In Ref. 1; AAC99417." evidence="6" ref="1">
    <original>Q</original>
    <variation>E</variation>
    <location>
        <position position="264"/>
    </location>
</feature>
<feature type="sequence conflict" description="In Ref. 1; AAC99417." evidence="6" ref="1">
    <original>I</original>
    <variation>L</variation>
    <location>
        <position position="396"/>
    </location>
</feature>
<reference key="1">
    <citation type="journal article" date="1999" name="Development">
        <title>A new family of growth factors produced by the fat body and active on Drosophila imaginal disc cells.</title>
        <authorList>
            <person name="Kawamura K."/>
            <person name="Shibata T."/>
            <person name="Saget O."/>
            <person name="Peel D."/>
            <person name="Bryant P.J."/>
        </authorList>
    </citation>
    <scope>NUCLEOTIDE SEQUENCE [MRNA]</scope>
    <scope>PROTEIN SEQUENCE OF 21-52</scope>
    <scope>FUNCTION</scope>
    <scope>SUBCELLULAR LOCATION</scope>
    <scope>TISSUE SPECIFICITY</scope>
    <scope>DEVELOPMENTAL STAGE</scope>
    <source>
        <tissue>Imaginal disk</tissue>
    </source>
</reference>
<reference key="2">
    <citation type="journal article" date="2002" name="Genetics">
        <title>Polymorphism patterns in two tightly linked developmental genes, Idgf1 and Idgf3, of Drosophila melanogaster.</title>
        <authorList>
            <person name="Zurovcova M."/>
            <person name="Ayala F.J."/>
        </authorList>
    </citation>
    <scope>NUCLEOTIDE SEQUENCE [GENOMIC DNA]</scope>
    <scope>VARIANTS</scope>
    <source>
        <strain>MB01a</strain>
        <strain>MB08b</strain>
        <strain>MB13a</strain>
        <strain>MB15b</strain>
        <strain>MB25a</strain>
        <strain>MB29b</strain>
        <strain>MB33a</strain>
        <strain>MB34a</strain>
        <strain>MB36a</strain>
        <strain>MB37a</strain>
        <strain>MB39b</strain>
        <strain>MB40b</strain>
        <strain>MB45b</strain>
        <strain>MB46b</strain>
        <strain>MB47a</strain>
        <strain>MB48b</strain>
        <strain>MB52b</strain>
        <strain>MB58b</strain>
        <strain>MB63a</strain>
        <strain>MB80b</strain>
    </source>
</reference>
<reference key="3">
    <citation type="journal article" date="1999" name="Genetics">
        <title>An exploration of the sequence of a 2.9-Mb region of the genome of Drosophila melanogaster: the Adh region.</title>
        <authorList>
            <person name="Ashburner M."/>
            <person name="Misra S."/>
            <person name="Roote J."/>
            <person name="Lewis S.E."/>
            <person name="Blazej R.G."/>
            <person name="Davis T."/>
            <person name="Doyle C."/>
            <person name="Galle R.F."/>
            <person name="George R.A."/>
            <person name="Harris N.L."/>
            <person name="Hartzell G."/>
            <person name="Harvey D.A."/>
            <person name="Hong L."/>
            <person name="Houston K.A."/>
            <person name="Hoskins R.A."/>
            <person name="Johnson G."/>
            <person name="Martin C."/>
            <person name="Moshrefi A.R."/>
            <person name="Palazzolo M."/>
            <person name="Reese M.G."/>
            <person name="Spradling A.C."/>
            <person name="Tsang G."/>
            <person name="Wan K.H."/>
            <person name="Whitelaw K."/>
            <person name="Celniker S.E."/>
            <person name="Rubin G.M."/>
        </authorList>
    </citation>
    <scope>NUCLEOTIDE SEQUENCE [LARGE SCALE GENOMIC DNA]</scope>
    <source>
        <strain>Berkeley</strain>
    </source>
</reference>
<reference key="4">
    <citation type="journal article" date="2000" name="Science">
        <title>The genome sequence of Drosophila melanogaster.</title>
        <authorList>
            <person name="Adams M.D."/>
            <person name="Celniker S.E."/>
            <person name="Holt R.A."/>
            <person name="Evans C.A."/>
            <person name="Gocayne J.D."/>
            <person name="Amanatides P.G."/>
            <person name="Scherer S.E."/>
            <person name="Li P.W."/>
            <person name="Hoskins R.A."/>
            <person name="Galle R.F."/>
            <person name="George R.A."/>
            <person name="Lewis S.E."/>
            <person name="Richards S."/>
            <person name="Ashburner M."/>
            <person name="Henderson S.N."/>
            <person name="Sutton G.G."/>
            <person name="Wortman J.R."/>
            <person name="Yandell M.D."/>
            <person name="Zhang Q."/>
            <person name="Chen L.X."/>
            <person name="Brandon R.C."/>
            <person name="Rogers Y.-H.C."/>
            <person name="Blazej R.G."/>
            <person name="Champe M."/>
            <person name="Pfeiffer B.D."/>
            <person name="Wan K.H."/>
            <person name="Doyle C."/>
            <person name="Baxter E.G."/>
            <person name="Helt G."/>
            <person name="Nelson C.R."/>
            <person name="Miklos G.L.G."/>
            <person name="Abril J.F."/>
            <person name="Agbayani A."/>
            <person name="An H.-J."/>
            <person name="Andrews-Pfannkoch C."/>
            <person name="Baldwin D."/>
            <person name="Ballew R.M."/>
            <person name="Basu A."/>
            <person name="Baxendale J."/>
            <person name="Bayraktaroglu L."/>
            <person name="Beasley E.M."/>
            <person name="Beeson K.Y."/>
            <person name="Benos P.V."/>
            <person name="Berman B.P."/>
            <person name="Bhandari D."/>
            <person name="Bolshakov S."/>
            <person name="Borkova D."/>
            <person name="Botchan M.R."/>
            <person name="Bouck J."/>
            <person name="Brokstein P."/>
            <person name="Brottier P."/>
            <person name="Burtis K.C."/>
            <person name="Busam D.A."/>
            <person name="Butler H."/>
            <person name="Cadieu E."/>
            <person name="Center A."/>
            <person name="Chandra I."/>
            <person name="Cherry J.M."/>
            <person name="Cawley S."/>
            <person name="Dahlke C."/>
            <person name="Davenport L.B."/>
            <person name="Davies P."/>
            <person name="de Pablos B."/>
            <person name="Delcher A."/>
            <person name="Deng Z."/>
            <person name="Mays A.D."/>
            <person name="Dew I."/>
            <person name="Dietz S.M."/>
            <person name="Dodson K."/>
            <person name="Doup L.E."/>
            <person name="Downes M."/>
            <person name="Dugan-Rocha S."/>
            <person name="Dunkov B.C."/>
            <person name="Dunn P."/>
            <person name="Durbin K.J."/>
            <person name="Evangelista C.C."/>
            <person name="Ferraz C."/>
            <person name="Ferriera S."/>
            <person name="Fleischmann W."/>
            <person name="Fosler C."/>
            <person name="Gabrielian A.E."/>
            <person name="Garg N.S."/>
            <person name="Gelbart W.M."/>
            <person name="Glasser K."/>
            <person name="Glodek A."/>
            <person name="Gong F."/>
            <person name="Gorrell J.H."/>
            <person name="Gu Z."/>
            <person name="Guan P."/>
            <person name="Harris M."/>
            <person name="Harris N.L."/>
            <person name="Harvey D.A."/>
            <person name="Heiman T.J."/>
            <person name="Hernandez J.R."/>
            <person name="Houck J."/>
            <person name="Hostin D."/>
            <person name="Houston K.A."/>
            <person name="Howland T.J."/>
            <person name="Wei M.-H."/>
            <person name="Ibegwam C."/>
            <person name="Jalali M."/>
            <person name="Kalush F."/>
            <person name="Karpen G.H."/>
            <person name="Ke Z."/>
            <person name="Kennison J.A."/>
            <person name="Ketchum K.A."/>
            <person name="Kimmel B.E."/>
            <person name="Kodira C.D."/>
            <person name="Kraft C.L."/>
            <person name="Kravitz S."/>
            <person name="Kulp D."/>
            <person name="Lai Z."/>
            <person name="Lasko P."/>
            <person name="Lei Y."/>
            <person name="Levitsky A.A."/>
            <person name="Li J.H."/>
            <person name="Li Z."/>
            <person name="Liang Y."/>
            <person name="Lin X."/>
            <person name="Liu X."/>
            <person name="Mattei B."/>
            <person name="McIntosh T.C."/>
            <person name="McLeod M.P."/>
            <person name="McPherson D."/>
            <person name="Merkulov G."/>
            <person name="Milshina N.V."/>
            <person name="Mobarry C."/>
            <person name="Morris J."/>
            <person name="Moshrefi A."/>
            <person name="Mount S.M."/>
            <person name="Moy M."/>
            <person name="Murphy B."/>
            <person name="Murphy L."/>
            <person name="Muzny D.M."/>
            <person name="Nelson D.L."/>
            <person name="Nelson D.R."/>
            <person name="Nelson K.A."/>
            <person name="Nixon K."/>
            <person name="Nusskern D.R."/>
            <person name="Pacleb J.M."/>
            <person name="Palazzolo M."/>
            <person name="Pittman G.S."/>
            <person name="Pan S."/>
            <person name="Pollard J."/>
            <person name="Puri V."/>
            <person name="Reese M.G."/>
            <person name="Reinert K."/>
            <person name="Remington K."/>
            <person name="Saunders R.D.C."/>
            <person name="Scheeler F."/>
            <person name="Shen H."/>
            <person name="Shue B.C."/>
            <person name="Siden-Kiamos I."/>
            <person name="Simpson M."/>
            <person name="Skupski M.P."/>
            <person name="Smith T.J."/>
            <person name="Spier E."/>
            <person name="Spradling A.C."/>
            <person name="Stapleton M."/>
            <person name="Strong R."/>
            <person name="Sun E."/>
            <person name="Svirskas R."/>
            <person name="Tector C."/>
            <person name="Turner R."/>
            <person name="Venter E."/>
            <person name="Wang A.H."/>
            <person name="Wang X."/>
            <person name="Wang Z.-Y."/>
            <person name="Wassarman D.A."/>
            <person name="Weinstock G.M."/>
            <person name="Weissenbach J."/>
            <person name="Williams S.M."/>
            <person name="Woodage T."/>
            <person name="Worley K.C."/>
            <person name="Wu D."/>
            <person name="Yang S."/>
            <person name="Yao Q.A."/>
            <person name="Ye J."/>
            <person name="Yeh R.-F."/>
            <person name="Zaveri J.S."/>
            <person name="Zhan M."/>
            <person name="Zhang G."/>
            <person name="Zhao Q."/>
            <person name="Zheng L."/>
            <person name="Zheng X.H."/>
            <person name="Zhong F.N."/>
            <person name="Zhong W."/>
            <person name="Zhou X."/>
            <person name="Zhu S.C."/>
            <person name="Zhu X."/>
            <person name="Smith H.O."/>
            <person name="Gibbs R.A."/>
            <person name="Myers E.W."/>
            <person name="Rubin G.M."/>
            <person name="Venter J.C."/>
        </authorList>
    </citation>
    <scope>NUCLEOTIDE SEQUENCE [LARGE SCALE GENOMIC DNA]</scope>
    <source>
        <strain>Berkeley</strain>
    </source>
</reference>
<reference key="5">
    <citation type="journal article" date="2002" name="Genome Biol.">
        <title>Annotation of the Drosophila melanogaster euchromatic genome: a systematic review.</title>
        <authorList>
            <person name="Misra S."/>
            <person name="Crosby M.A."/>
            <person name="Mungall C.J."/>
            <person name="Matthews B.B."/>
            <person name="Campbell K.S."/>
            <person name="Hradecky P."/>
            <person name="Huang Y."/>
            <person name="Kaminker J.S."/>
            <person name="Millburn G.H."/>
            <person name="Prochnik S.E."/>
            <person name="Smith C.D."/>
            <person name="Tupy J.L."/>
            <person name="Whitfield E.J."/>
            <person name="Bayraktaroglu L."/>
            <person name="Berman B.P."/>
            <person name="Bettencourt B.R."/>
            <person name="Celniker S.E."/>
            <person name="de Grey A.D.N.J."/>
            <person name="Drysdale R.A."/>
            <person name="Harris N.L."/>
            <person name="Richter J."/>
            <person name="Russo S."/>
            <person name="Schroeder A.J."/>
            <person name="Shu S.Q."/>
            <person name="Stapleton M."/>
            <person name="Yamada C."/>
            <person name="Ashburner M."/>
            <person name="Gelbart W.M."/>
            <person name="Rubin G.M."/>
            <person name="Lewis S.E."/>
        </authorList>
    </citation>
    <scope>GENOME REANNOTATION</scope>
    <source>
        <strain>Berkeley</strain>
    </source>
</reference>
<reference key="6">
    <citation type="journal article" date="2002" name="Genome Biol.">
        <title>A Drosophila full-length cDNA resource.</title>
        <authorList>
            <person name="Stapleton M."/>
            <person name="Carlson J.W."/>
            <person name="Brokstein P."/>
            <person name="Yu C."/>
            <person name="Champe M."/>
            <person name="George R.A."/>
            <person name="Guarin H."/>
            <person name="Kronmiller B."/>
            <person name="Pacleb J.M."/>
            <person name="Park S."/>
            <person name="Wan K.H."/>
            <person name="Rubin G.M."/>
            <person name="Celniker S.E."/>
        </authorList>
    </citation>
    <scope>NUCLEOTIDE SEQUENCE [LARGE SCALE MRNA]</scope>
    <source>
        <strain>Berkeley</strain>
        <tissue>Head</tissue>
    </source>
</reference>
<reference key="7">
    <citation type="journal article" date="2007" name="Glycobiology">
        <title>Identification of N-glycosylated proteins from the central nervous system of Drosophila melanogaster.</title>
        <authorList>
            <person name="Koles K."/>
            <person name="Lim J.-M."/>
            <person name="Aoki K."/>
            <person name="Porterfield M."/>
            <person name="Tiemeyer M."/>
            <person name="Wells L."/>
            <person name="Panin V."/>
        </authorList>
    </citation>
    <scope>GLYCOSYLATION [LARGE SCALE ANALYSIS] AT ASN-346</scope>
    <scope>IDENTIFICATION BY MASS SPECTROMETRY</scope>
    <source>
        <strain>Oregon-R</strain>
        <tissue>Head</tissue>
    </source>
</reference>
<keyword id="KW-0217">Developmental protein</keyword>
<keyword id="KW-0903">Direct protein sequencing</keyword>
<keyword id="KW-1015">Disulfide bond</keyword>
<keyword id="KW-0325">Glycoprotein</keyword>
<keyword id="KW-1185">Reference proteome</keyword>
<keyword id="KW-0964">Secreted</keyword>
<keyword id="KW-0732">Signal</keyword>
<organism>
    <name type="scientific">Drosophila melanogaster</name>
    <name type="common">Fruit fly</name>
    <dbReference type="NCBI Taxonomy" id="7227"/>
    <lineage>
        <taxon>Eukaryota</taxon>
        <taxon>Metazoa</taxon>
        <taxon>Ecdysozoa</taxon>
        <taxon>Arthropoda</taxon>
        <taxon>Hexapoda</taxon>
        <taxon>Insecta</taxon>
        <taxon>Pterygota</taxon>
        <taxon>Neoptera</taxon>
        <taxon>Endopterygota</taxon>
        <taxon>Diptera</taxon>
        <taxon>Brachycera</taxon>
        <taxon>Muscomorpha</taxon>
        <taxon>Ephydroidea</taxon>
        <taxon>Drosophilidae</taxon>
        <taxon>Drosophila</taxon>
        <taxon>Sophophora</taxon>
    </lineage>
</organism>
<protein>
    <recommendedName>
        <fullName>Chitinase-like protein Idgf1</fullName>
    </recommendedName>
    <alternativeName>
        <fullName>Imaginal disk growth factor protein 1</fullName>
    </alternativeName>
</protein>
<sequence length="439" mass="49376">MRFQLFYILGLLSVTSLTHAASNLICYYDSNSYLRQGLAKMHTNELDLALQFCTHLVYGYAGLKSGTLELFSLNVDLDMFYYKDITALRQKFPQLKILLSVGGDRDVDEAHPNKYVELLEANRTAQQNFIDSSMILLKRNGFDGLDLAFQLPRNKPRKVHGSLGSYWKSFKKLFTGDFVVDPQAEEHKSQFTDLVGNIKNAFRSANLMLSLTVLPNVNSTWYFDVPKLHPQFDYINLAAFDFLTPLRNPEEADFTAPIFFQDEQNRLPHLNVEFQINYWLQNHCPGQKLNLGIASYGRAWKLSKGSGLSGAPIVHETCGVAPGGIQIQSAEGLLSWPEICSKLSQNASAQYRGELAPLRKVTDLTQKYGNYALRPADDNGDFGVWLSFDDPDFAGIKAVYAKGKGLGGIALFDLSYDDFRGLCTGQKYPILRSIKYFMG</sequence>
<evidence type="ECO:0000250" key="1"/>
<evidence type="ECO:0000255" key="2"/>
<evidence type="ECO:0000255" key="3">
    <source>
        <dbReference type="PROSITE-ProRule" id="PRU01258"/>
    </source>
</evidence>
<evidence type="ECO:0000269" key="4">
    <source>
    </source>
</evidence>
<evidence type="ECO:0000269" key="5">
    <source>
    </source>
</evidence>
<evidence type="ECO:0000305" key="6"/>
<accession>Q8MM24</accession>
<accession>O96664</accession>
<accession>Q8MM30</accession>
<accession>Q8MM31</accession>
<accession>Q8MM38</accession>
<accession>Q8MM92</accession>
<accession>Q8MX42</accession>
<accession>Q8MX43</accession>
<accession>Q8MX44</accession>
<accession>Q8MX45</accession>
<accession>Q8MX46</accession>
<accession>Q8MX47</accession>
<accession>Q8MX48</accession>
<accession>Q8MX49</accession>
<accession>Q8MX50</accession>
<accession>Q9V3P8</accession>